<comment type="function">
    <text>DNA-dependent RNA polymerase catalyzes the transcription of DNA into RNA using the four ribonucleoside triphosphates as substrates.</text>
</comment>
<comment type="catalytic activity">
    <reaction evidence="2">
        <text>RNA(n) + a ribonucleoside 5'-triphosphate = RNA(n+1) + diphosphate</text>
        <dbReference type="Rhea" id="RHEA:21248"/>
        <dbReference type="Rhea" id="RHEA-COMP:14527"/>
        <dbReference type="Rhea" id="RHEA-COMP:17342"/>
        <dbReference type="ChEBI" id="CHEBI:33019"/>
        <dbReference type="ChEBI" id="CHEBI:61557"/>
        <dbReference type="ChEBI" id="CHEBI:140395"/>
        <dbReference type="EC" id="2.7.7.6"/>
    </reaction>
</comment>
<comment type="cofactor">
    <cofactor evidence="2">
        <name>Zn(2+)</name>
        <dbReference type="ChEBI" id="CHEBI:29105"/>
    </cofactor>
    <text evidence="2">Binds 1 Zn(2+) ion per subunit.</text>
</comment>
<comment type="subunit">
    <text evidence="1">In plastids the minimal PEP RNA polymerase catalytic core is composed of four subunits: alpha, beta, beta', and beta''. When a (nuclear-encoded) sigma factor is associated with the core the holoenzyme is formed, which can initiate transcription (By similarity).</text>
</comment>
<comment type="subcellular location">
    <subcellularLocation>
        <location>Plastid</location>
        <location>Chloroplast</location>
    </subcellularLocation>
</comment>
<comment type="similarity">
    <text evidence="3">Belongs to the RNA polymerase beta' chain family. RpoC2 subfamily.</text>
</comment>
<dbReference type="EC" id="2.7.7.6"/>
<dbReference type="EMBL" id="X17191">
    <property type="protein sequence ID" value="CAA35054.1"/>
    <property type="molecule type" value="Genomic_DNA"/>
</dbReference>
<dbReference type="EMBL" id="X70810">
    <property type="protein sequence ID" value="CAA50136.1"/>
    <property type="molecule type" value="Genomic_DNA"/>
</dbReference>
<dbReference type="EMBL" id="M22010">
    <property type="protein sequence ID" value="AAA84228.1"/>
    <property type="molecule type" value="Genomic_DNA"/>
</dbReference>
<dbReference type="PIR" id="S19259">
    <property type="entry name" value="RNEGB2"/>
</dbReference>
<dbReference type="RefSeq" id="NP_041949.1">
    <property type="nucleotide sequence ID" value="NC_001603.2"/>
</dbReference>
<dbReference type="SMR" id="P23581"/>
<dbReference type="GeneID" id="807500"/>
<dbReference type="GO" id="GO:0009507">
    <property type="term" value="C:chloroplast"/>
    <property type="evidence" value="ECO:0007669"/>
    <property type="project" value="UniProtKB-SubCell"/>
</dbReference>
<dbReference type="GO" id="GO:0000428">
    <property type="term" value="C:DNA-directed RNA polymerase complex"/>
    <property type="evidence" value="ECO:0007669"/>
    <property type="project" value="UniProtKB-KW"/>
</dbReference>
<dbReference type="GO" id="GO:0005739">
    <property type="term" value="C:mitochondrion"/>
    <property type="evidence" value="ECO:0007669"/>
    <property type="project" value="GOC"/>
</dbReference>
<dbReference type="GO" id="GO:0003677">
    <property type="term" value="F:DNA binding"/>
    <property type="evidence" value="ECO:0007669"/>
    <property type="project" value="InterPro"/>
</dbReference>
<dbReference type="GO" id="GO:0003899">
    <property type="term" value="F:DNA-directed RNA polymerase activity"/>
    <property type="evidence" value="ECO:0007669"/>
    <property type="project" value="UniProtKB-EC"/>
</dbReference>
<dbReference type="GO" id="GO:0046872">
    <property type="term" value="F:metal ion binding"/>
    <property type="evidence" value="ECO:0007669"/>
    <property type="project" value="UniProtKB-KW"/>
</dbReference>
<dbReference type="GO" id="GO:0006351">
    <property type="term" value="P:DNA-templated transcription"/>
    <property type="evidence" value="ECO:0007669"/>
    <property type="project" value="InterPro"/>
</dbReference>
<dbReference type="CDD" id="cd02655">
    <property type="entry name" value="RNAP_beta'_C"/>
    <property type="match status" value="1"/>
</dbReference>
<dbReference type="Gene3D" id="1.10.132.30">
    <property type="match status" value="1"/>
</dbReference>
<dbReference type="Gene3D" id="1.10.150.390">
    <property type="match status" value="1"/>
</dbReference>
<dbReference type="Gene3D" id="1.10.1790.20">
    <property type="match status" value="1"/>
</dbReference>
<dbReference type="Gene3D" id="1.10.274.100">
    <property type="entry name" value="RNA polymerase Rpb1, domain 3"/>
    <property type="match status" value="1"/>
</dbReference>
<dbReference type="InterPro" id="IPR045867">
    <property type="entry name" value="DNA-dir_RpoC_beta_prime"/>
</dbReference>
<dbReference type="InterPro" id="IPR042102">
    <property type="entry name" value="RNA_pol_Rpb1_3_sf"/>
</dbReference>
<dbReference type="InterPro" id="IPR007083">
    <property type="entry name" value="RNA_pol_Rpb1_4"/>
</dbReference>
<dbReference type="InterPro" id="IPR007081">
    <property type="entry name" value="RNA_pol_Rpb1_5"/>
</dbReference>
<dbReference type="InterPro" id="IPR038120">
    <property type="entry name" value="Rpb1_funnel_sf"/>
</dbReference>
<dbReference type="PANTHER" id="PTHR19376">
    <property type="entry name" value="DNA-DIRECTED RNA POLYMERASE"/>
    <property type="match status" value="1"/>
</dbReference>
<dbReference type="PANTHER" id="PTHR19376:SF68">
    <property type="entry name" value="DNA-DIRECTED RNA POLYMERASE SUBUNIT BETA"/>
    <property type="match status" value="1"/>
</dbReference>
<dbReference type="Pfam" id="PF05000">
    <property type="entry name" value="RNA_pol_Rpb1_4"/>
    <property type="match status" value="1"/>
</dbReference>
<dbReference type="Pfam" id="PF04998">
    <property type="entry name" value="RNA_pol_Rpb1_5"/>
    <property type="match status" value="1"/>
</dbReference>
<dbReference type="SUPFAM" id="SSF64484">
    <property type="entry name" value="beta and beta-prime subunits of DNA dependent RNA-polymerase"/>
    <property type="match status" value="1"/>
</dbReference>
<evidence type="ECO:0000250" key="1"/>
<evidence type="ECO:0000250" key="2">
    <source>
        <dbReference type="UniProtKB" id="P0A8T7"/>
    </source>
</evidence>
<evidence type="ECO:0000305" key="3"/>
<feature type="chain" id="PRO_0000067923" description="DNA-directed RNA polymerase subunit beta''">
    <location>
        <begin position="1"/>
        <end position="830"/>
    </location>
</feature>
<feature type="binding site" evidence="2">
    <location>
        <position position="219"/>
    </location>
    <ligand>
        <name>Zn(2+)</name>
        <dbReference type="ChEBI" id="CHEBI:29105"/>
    </ligand>
</feature>
<feature type="binding site" evidence="2">
    <location>
        <position position="291"/>
    </location>
    <ligand>
        <name>Zn(2+)</name>
        <dbReference type="ChEBI" id="CHEBI:29105"/>
    </ligand>
</feature>
<feature type="binding site" evidence="2">
    <location>
        <position position="298"/>
    </location>
    <ligand>
        <name>Zn(2+)</name>
        <dbReference type="ChEBI" id="CHEBI:29105"/>
    </ligand>
</feature>
<feature type="binding site" evidence="2">
    <location>
        <position position="301"/>
    </location>
    <ligand>
        <name>Zn(2+)</name>
        <dbReference type="ChEBI" id="CHEBI:29105"/>
    </ligand>
</feature>
<feature type="sequence conflict" description="In Ref. 3; AAA84228." evidence="3" ref="3">
    <original>I</original>
    <variation>II</variation>
    <location>
        <position position="593"/>
    </location>
</feature>
<feature type="sequence conflict" description="In Ref. 3; AAA84228." evidence="3" ref="3">
    <original>L</original>
    <variation>R</variation>
    <location>
        <position position="688"/>
    </location>
</feature>
<keyword id="KW-0150">Chloroplast</keyword>
<keyword id="KW-0240">DNA-directed RNA polymerase</keyword>
<keyword id="KW-0479">Metal-binding</keyword>
<keyword id="KW-0548">Nucleotidyltransferase</keyword>
<keyword id="KW-0934">Plastid</keyword>
<keyword id="KW-0804">Transcription</keyword>
<keyword id="KW-0808">Transferase</keyword>
<keyword id="KW-0862">Zinc</keyword>
<geneLocation type="chloroplast"/>
<reference key="1">
    <citation type="journal article" date="1990" name="Nucleic Acids Res.">
        <title>The Euglena gracilis chloroplast rpoB gene. Novel gene organization and transcription of the RNA polymerase subunit operon.</title>
        <authorList>
            <person name="Yepiz-Plascencia G.M."/>
            <person name="Radebaugh C.A."/>
            <person name="Hallick R.B."/>
        </authorList>
    </citation>
    <scope>NUCLEOTIDE SEQUENCE [GENOMIC DNA]</scope>
    <source>
        <strain>Z / UTEX 753</strain>
    </source>
</reference>
<reference key="2">
    <citation type="journal article" date="1993" name="Nucleic Acids Res.">
        <title>Complete sequence of Euglena gracilis chloroplast DNA.</title>
        <authorList>
            <person name="Hallick R.B."/>
            <person name="Hong L."/>
            <person name="Drager R.G."/>
            <person name="Favreau M.R."/>
            <person name="Monfort A."/>
            <person name="Orsat B."/>
            <person name="Spielmann A."/>
            <person name="Stutz E."/>
        </authorList>
    </citation>
    <scope>NUCLEOTIDE SEQUENCE [LARGE SCALE GENOMIC DNA]</scope>
    <source>
        <strain>Z / UTEX 753</strain>
    </source>
</reference>
<reference key="3">
    <citation type="journal article" date="1982" name="J. Biol. Chem.">
        <title>Euglena gracilis chloroplast transfer RNA transcription units. II. Nucleotide sequence analysis of a tRNAVal-tRNAAsn-tRNAArg-tRNALeu gene cluster.</title>
        <authorList>
            <person name="Orozco E.M."/>
            <person name="Hallick R.B."/>
        </authorList>
    </citation>
    <scope>NUCLEOTIDE SEQUENCE [GENOMIC DNA] OF 586-830</scope>
    <source>
        <strain>Z / UTEX 753</strain>
    </source>
</reference>
<proteinExistence type="inferred from homology"/>
<accession>P23581</accession>
<name>RPOC2_EUGGR</name>
<organism>
    <name type="scientific">Euglena gracilis</name>
    <dbReference type="NCBI Taxonomy" id="3039"/>
    <lineage>
        <taxon>Eukaryota</taxon>
        <taxon>Discoba</taxon>
        <taxon>Euglenozoa</taxon>
        <taxon>Euglenida</taxon>
        <taxon>Spirocuta</taxon>
        <taxon>Euglenophyceae</taxon>
        <taxon>Euglenales</taxon>
        <taxon>Euglenaceae</taxon>
        <taxon>Euglena</taxon>
    </lineage>
</organism>
<sequence>MNFGNIVCFNRVFDKNEIRNLISWFLSNYGSIRTKELLDKMKNFGFTYATTTGLSLGLGDLKIPSSKANLVKSSEKILFKTRNRYKNGMINFINVLDEERDIWNVVNENLKKESINNLRQSDFLNPLYSMTLSGARGSITQVKQLIGMRGLMSDSQGNVIPFPIKTNFKEGLNITEYFVSCYGARKGLIDTALKTANAGYLTRRMIYTAQNLIVKRSDCFTKYNTCVLLQNQDKEELKFLKEKLIGRVLAKTIVNAKTGDILVSAGQDICNYTFKKIINFPEVYIRTPFNCVLMEGICQICYGWNLACGKMVELGECVGILAAQSIGEPGTQLTMRTFHTGGVFSAKAKEVITSPLNGKIWYDLNTGLRRVYNKFKEKAFLTLQEKKIVIYENDVSKSIMFLPSSTLLYVKPGRKIFDKQIIGESVNSNLKNDVFGIEEIRDVKAKISGQIFFPQINSKQFGKIFWIISSIIMSFTSLFFHLTKKFSFKNKLICPTTNVHKKELFVNRKKELFPRKFGKLFINIRNVNSLVDKSKVLKKRSSHIITCILDQDKVIMLRNLKKQKRIFGNFKIGCFLKTGQIISNFKLLHSSQIIQERKEFSIFRKVMPFSTNDDTLMRIEDKPFIRKNQLLYRVNFVREKTYDIVQGLPKVEKLLEARMTSSLKEIINNPHDILTESFFTFLDDYENLVAARKSFEVIQKYLIDGVQTVYKSQGVKIADKHIELIVKQITSKVIVTNPGDSSFMVGDFLDLNLVEVLNKRLVNSIVYEPIIMGLTRFSLSSQSFIAQASFQETTRVLTKAALQGRADWLSGLKENLVLGNIIPAGTGFKN</sequence>
<protein>
    <recommendedName>
        <fullName>DNA-directed RNA polymerase subunit beta''</fullName>
        <ecNumber>2.7.7.6</ecNumber>
    </recommendedName>
    <alternativeName>
        <fullName>PEP</fullName>
    </alternativeName>
    <alternativeName>
        <fullName>Plastid-encoded RNA polymerase subunit beta''</fullName>
        <shortName>RNA polymerase subunit beta''</shortName>
    </alternativeName>
</protein>
<gene>
    <name type="primary">rpoC2</name>
</gene>